<dbReference type="EC" id="2.1.1.201" evidence="1"/>
<dbReference type="EMBL" id="AB019233">
    <property type="protein sequence ID" value="BAA96953.1"/>
    <property type="molecule type" value="Genomic_DNA"/>
</dbReference>
<dbReference type="EMBL" id="CP002688">
    <property type="protein sequence ID" value="AED96880.1"/>
    <property type="molecule type" value="Genomic_DNA"/>
</dbReference>
<dbReference type="EMBL" id="CP002688">
    <property type="protein sequence ID" value="AED96881.1"/>
    <property type="molecule type" value="Genomic_DNA"/>
</dbReference>
<dbReference type="EMBL" id="CP002688">
    <property type="protein sequence ID" value="AED96882.1"/>
    <property type="molecule type" value="Genomic_DNA"/>
</dbReference>
<dbReference type="EMBL" id="CP002688">
    <property type="protein sequence ID" value="ANM70845.1"/>
    <property type="molecule type" value="Genomic_DNA"/>
</dbReference>
<dbReference type="EMBL" id="AY050939">
    <property type="protein sequence ID" value="AAK93616.1"/>
    <property type="molecule type" value="mRNA"/>
</dbReference>
<dbReference type="EMBL" id="AY091173">
    <property type="protein sequence ID" value="AAM14112.1"/>
    <property type="molecule type" value="mRNA"/>
</dbReference>
<dbReference type="RefSeq" id="NP_001078760.1">
    <property type="nucleotide sequence ID" value="NM_001085291.3"/>
</dbReference>
<dbReference type="RefSeq" id="NP_001190558.1">
    <property type="nucleotide sequence ID" value="NM_001203629.1"/>
</dbReference>
<dbReference type="RefSeq" id="NP_001332423.1">
    <property type="nucleotide sequence ID" value="NM_001345255.1"/>
</dbReference>
<dbReference type="RefSeq" id="NP_200540.1">
    <property type="nucleotide sequence ID" value="NM_125112.5"/>
</dbReference>
<dbReference type="SMR" id="Q9LVC8"/>
<dbReference type="BioGRID" id="21079">
    <property type="interactions" value="2"/>
</dbReference>
<dbReference type="FunCoup" id="Q9LVC8">
    <property type="interactions" value="3560"/>
</dbReference>
<dbReference type="IntAct" id="Q9LVC8">
    <property type="interactions" value="2"/>
</dbReference>
<dbReference type="STRING" id="3702.Q9LVC8"/>
<dbReference type="PaxDb" id="3702-AT5G57300.3"/>
<dbReference type="ProteomicsDB" id="241107"/>
<dbReference type="EnsemblPlants" id="AT5G57300.1">
    <property type="protein sequence ID" value="AT5G57300.1"/>
    <property type="gene ID" value="AT5G57300"/>
</dbReference>
<dbReference type="EnsemblPlants" id="AT5G57300.2">
    <property type="protein sequence ID" value="AT5G57300.2"/>
    <property type="gene ID" value="AT5G57300"/>
</dbReference>
<dbReference type="EnsemblPlants" id="AT5G57300.3">
    <property type="protein sequence ID" value="AT5G57300.3"/>
    <property type="gene ID" value="AT5G57300"/>
</dbReference>
<dbReference type="EnsemblPlants" id="AT5G57300.4">
    <property type="protein sequence ID" value="AT5G57300.4"/>
    <property type="gene ID" value="AT5G57300"/>
</dbReference>
<dbReference type="GeneID" id="835835"/>
<dbReference type="Gramene" id="AT5G57300.1">
    <property type="protein sequence ID" value="AT5G57300.1"/>
    <property type="gene ID" value="AT5G57300"/>
</dbReference>
<dbReference type="Gramene" id="AT5G57300.2">
    <property type="protein sequence ID" value="AT5G57300.2"/>
    <property type="gene ID" value="AT5G57300"/>
</dbReference>
<dbReference type="Gramene" id="AT5G57300.3">
    <property type="protein sequence ID" value="AT5G57300.3"/>
    <property type="gene ID" value="AT5G57300"/>
</dbReference>
<dbReference type="Gramene" id="AT5G57300.4">
    <property type="protein sequence ID" value="AT5G57300.4"/>
    <property type="gene ID" value="AT5G57300"/>
</dbReference>
<dbReference type="KEGG" id="ath:AT5G57300"/>
<dbReference type="Araport" id="AT5G57300"/>
<dbReference type="TAIR" id="AT5G57300">
    <property type="gene designation" value="COQ5"/>
</dbReference>
<dbReference type="eggNOG" id="KOG1540">
    <property type="taxonomic scope" value="Eukaryota"/>
</dbReference>
<dbReference type="HOGENOM" id="CLU_037990_0_1_1"/>
<dbReference type="InParanoid" id="Q9LVC8"/>
<dbReference type="OMA" id="MNDVMSM"/>
<dbReference type="OrthoDB" id="6329284at2759"/>
<dbReference type="PhylomeDB" id="Q9LVC8"/>
<dbReference type="BioCyc" id="ARA:AT5G57300-MONOMER"/>
<dbReference type="BioCyc" id="MetaCyc:AT5G57300-MONOMER"/>
<dbReference type="UniPathway" id="UPA00232"/>
<dbReference type="PRO" id="PR:Q9LVC8"/>
<dbReference type="Proteomes" id="UP000006548">
    <property type="component" value="Chromosome 5"/>
</dbReference>
<dbReference type="ExpressionAtlas" id="Q9LVC8">
    <property type="expression patterns" value="baseline and differential"/>
</dbReference>
<dbReference type="GO" id="GO:0031314">
    <property type="term" value="C:extrinsic component of mitochondrial inner membrane"/>
    <property type="evidence" value="ECO:0007669"/>
    <property type="project" value="UniProtKB-UniRule"/>
</dbReference>
<dbReference type="GO" id="GO:0005739">
    <property type="term" value="C:mitochondrion"/>
    <property type="evidence" value="ECO:0007005"/>
    <property type="project" value="TAIR"/>
</dbReference>
<dbReference type="GO" id="GO:0008425">
    <property type="term" value="F:2-methoxy-6-polyprenyl-1,4-benzoquinol methyltransferase activity"/>
    <property type="evidence" value="ECO:0007669"/>
    <property type="project" value="UniProtKB-UniRule"/>
</dbReference>
<dbReference type="GO" id="GO:0032259">
    <property type="term" value="P:methylation"/>
    <property type="evidence" value="ECO:0007669"/>
    <property type="project" value="UniProtKB-KW"/>
</dbReference>
<dbReference type="CDD" id="cd02440">
    <property type="entry name" value="AdoMet_MTases"/>
    <property type="match status" value="1"/>
</dbReference>
<dbReference type="FunFam" id="3.40.50.150:FF:000064">
    <property type="entry name" value="2-methoxy-6-polyprenyl-1,4-benzoquinol methylase, mitochondrial"/>
    <property type="match status" value="1"/>
</dbReference>
<dbReference type="Gene3D" id="3.40.50.150">
    <property type="entry name" value="Vaccinia Virus protein VP39"/>
    <property type="match status" value="1"/>
</dbReference>
<dbReference type="HAMAP" id="MF_01813">
    <property type="entry name" value="MenG_UbiE_methyltr"/>
    <property type="match status" value="1"/>
</dbReference>
<dbReference type="InterPro" id="IPR029063">
    <property type="entry name" value="SAM-dependent_MTases_sf"/>
</dbReference>
<dbReference type="InterPro" id="IPR004033">
    <property type="entry name" value="UbiE/COQ5_MeTrFase"/>
</dbReference>
<dbReference type="InterPro" id="IPR023576">
    <property type="entry name" value="UbiE/COQ5_MeTrFase_CS"/>
</dbReference>
<dbReference type="NCBIfam" id="TIGR01934">
    <property type="entry name" value="MenG_MenH_UbiE"/>
    <property type="match status" value="1"/>
</dbReference>
<dbReference type="NCBIfam" id="NF001242">
    <property type="entry name" value="PRK00216.1-3"/>
    <property type="match status" value="1"/>
</dbReference>
<dbReference type="PANTHER" id="PTHR43591:SF24">
    <property type="entry name" value="2-METHOXY-6-POLYPRENYL-1,4-BENZOQUINOL METHYLASE, MITOCHONDRIAL"/>
    <property type="match status" value="1"/>
</dbReference>
<dbReference type="PANTHER" id="PTHR43591">
    <property type="entry name" value="METHYLTRANSFERASE"/>
    <property type="match status" value="1"/>
</dbReference>
<dbReference type="Pfam" id="PF01209">
    <property type="entry name" value="Ubie_methyltran"/>
    <property type="match status" value="1"/>
</dbReference>
<dbReference type="SUPFAM" id="SSF53335">
    <property type="entry name" value="S-adenosyl-L-methionine-dependent methyltransferases"/>
    <property type="match status" value="1"/>
</dbReference>
<dbReference type="PROSITE" id="PS51608">
    <property type="entry name" value="SAM_MT_UBIE"/>
    <property type="match status" value="1"/>
</dbReference>
<dbReference type="PROSITE" id="PS01183">
    <property type="entry name" value="UBIE_1"/>
    <property type="match status" value="1"/>
</dbReference>
<dbReference type="PROSITE" id="PS01184">
    <property type="entry name" value="UBIE_2"/>
    <property type="match status" value="1"/>
</dbReference>
<feature type="transit peptide" description="Mitochondrion" evidence="1">
    <location>
        <begin position="1"/>
        <end position="27"/>
    </location>
</feature>
<feature type="chain" id="PRO_0000375863" description="2-methoxy-6-polyprenyl-1,4-benzoquinol methylase, mitochondrial">
    <location>
        <begin position="28"/>
        <end position="288"/>
    </location>
</feature>
<feature type="binding site" evidence="1">
    <location>
        <position position="94"/>
    </location>
    <ligand>
        <name>S-adenosyl-L-methionine</name>
        <dbReference type="ChEBI" id="CHEBI:59789"/>
    </ligand>
</feature>
<feature type="binding site" evidence="1">
    <location>
        <position position="130"/>
    </location>
    <ligand>
        <name>S-adenosyl-L-methionine</name>
        <dbReference type="ChEBI" id="CHEBI:59789"/>
    </ligand>
</feature>
<feature type="binding site" evidence="1">
    <location>
        <begin position="160"/>
        <end position="161"/>
    </location>
    <ligand>
        <name>S-adenosyl-L-methionine</name>
        <dbReference type="ChEBI" id="CHEBI:59789"/>
    </ligand>
</feature>
<name>COQ5_ARATH</name>
<comment type="function">
    <text evidence="1">Methyltransferase required for the conversion of 2-polyprenyl-6-methoxy-1,4-benzoquinol (DDMQH2) to 2-polyprenyl-3-methyl-6-methoxy-1,4-benzoquinol (DMQH2).</text>
</comment>
<comment type="catalytic activity">
    <reaction evidence="1">
        <text>a 2-methoxy-6-(all-trans-polyprenyl)benzene-1,4-diol + S-adenosyl-L-methionine = a 5-methoxy-2-methyl-3-(all-trans-polyprenyl)benzene-1,4-diol + S-adenosyl-L-homocysteine + H(+)</text>
        <dbReference type="Rhea" id="RHEA:28286"/>
        <dbReference type="Rhea" id="RHEA-COMP:10858"/>
        <dbReference type="Rhea" id="RHEA-COMP:10859"/>
        <dbReference type="ChEBI" id="CHEBI:15378"/>
        <dbReference type="ChEBI" id="CHEBI:57856"/>
        <dbReference type="ChEBI" id="CHEBI:59789"/>
        <dbReference type="ChEBI" id="CHEBI:84166"/>
        <dbReference type="ChEBI" id="CHEBI:84167"/>
        <dbReference type="EC" id="2.1.1.201"/>
    </reaction>
</comment>
<comment type="pathway">
    <text evidence="1">Cofactor biosynthesis; ubiquinone biosynthesis.</text>
</comment>
<comment type="subunit">
    <text evidence="1">Component of a multi-subunit COQ enzyme complex.</text>
</comment>
<comment type="subcellular location">
    <subcellularLocation>
        <location evidence="1">Mitochondrion inner membrane</location>
        <topology evidence="1">Peripheral membrane protein</topology>
        <orientation evidence="1">Matrix side</orientation>
    </subcellularLocation>
</comment>
<comment type="similarity">
    <text evidence="1">Belongs to the class I-like SAM-binding methyltransferase superfamily. MenG/UbiE family.</text>
</comment>
<keyword id="KW-0472">Membrane</keyword>
<keyword id="KW-0489">Methyltransferase</keyword>
<keyword id="KW-0496">Mitochondrion</keyword>
<keyword id="KW-0999">Mitochondrion inner membrane</keyword>
<keyword id="KW-1185">Reference proteome</keyword>
<keyword id="KW-0949">S-adenosyl-L-methionine</keyword>
<keyword id="KW-0808">Transferase</keyword>
<keyword id="KW-0809">Transit peptide</keyword>
<keyword id="KW-0831">Ubiquinone biosynthesis</keyword>
<proteinExistence type="evidence at transcript level"/>
<organism>
    <name type="scientific">Arabidopsis thaliana</name>
    <name type="common">Mouse-ear cress</name>
    <dbReference type="NCBI Taxonomy" id="3702"/>
    <lineage>
        <taxon>Eukaryota</taxon>
        <taxon>Viridiplantae</taxon>
        <taxon>Streptophyta</taxon>
        <taxon>Embryophyta</taxon>
        <taxon>Tracheophyta</taxon>
        <taxon>Spermatophyta</taxon>
        <taxon>Magnoliopsida</taxon>
        <taxon>eudicotyledons</taxon>
        <taxon>Gunneridae</taxon>
        <taxon>Pentapetalae</taxon>
        <taxon>rosids</taxon>
        <taxon>malvids</taxon>
        <taxon>Brassicales</taxon>
        <taxon>Brassicaceae</taxon>
        <taxon>Camelineae</taxon>
        <taxon>Arabidopsis</taxon>
    </lineage>
</organism>
<evidence type="ECO:0000255" key="1">
    <source>
        <dbReference type="HAMAP-Rule" id="MF_03191"/>
    </source>
</evidence>
<protein>
    <recommendedName>
        <fullName evidence="1">2-methoxy-6-polyprenyl-1,4-benzoquinol methylase, mitochondrial</fullName>
        <ecNumber evidence="1">2.1.1.201</ecNumber>
    </recommendedName>
    <alternativeName>
        <fullName evidence="1">Ubiquinone biosynthesis methyltransferase COQ5</fullName>
    </alternativeName>
</protein>
<accession>Q9LVC8</accession>
<reference key="1">
    <citation type="journal article" date="2000" name="DNA Res.">
        <title>Structural analysis of Arabidopsis thaliana chromosome 5. X. Sequence features of the regions of 3,076,755 bp covered by sixty P1 and TAC clones.</title>
        <authorList>
            <person name="Sato S."/>
            <person name="Nakamura Y."/>
            <person name="Kaneko T."/>
            <person name="Katoh T."/>
            <person name="Asamizu E."/>
            <person name="Kotani H."/>
            <person name="Tabata S."/>
        </authorList>
    </citation>
    <scope>NUCLEOTIDE SEQUENCE [LARGE SCALE GENOMIC DNA]</scope>
    <source>
        <strain>cv. Columbia</strain>
    </source>
</reference>
<reference key="2">
    <citation type="journal article" date="2017" name="Plant J.">
        <title>Araport11: a complete reannotation of the Arabidopsis thaliana reference genome.</title>
        <authorList>
            <person name="Cheng C.Y."/>
            <person name="Krishnakumar V."/>
            <person name="Chan A.P."/>
            <person name="Thibaud-Nissen F."/>
            <person name="Schobel S."/>
            <person name="Town C.D."/>
        </authorList>
    </citation>
    <scope>GENOME REANNOTATION</scope>
    <source>
        <strain>cv. Columbia</strain>
    </source>
</reference>
<reference key="3">
    <citation type="journal article" date="2003" name="Science">
        <title>Empirical analysis of transcriptional activity in the Arabidopsis genome.</title>
        <authorList>
            <person name="Yamada K."/>
            <person name="Lim J."/>
            <person name="Dale J.M."/>
            <person name="Chen H."/>
            <person name="Shinn P."/>
            <person name="Palm C.J."/>
            <person name="Southwick A.M."/>
            <person name="Wu H.C."/>
            <person name="Kim C.J."/>
            <person name="Nguyen M."/>
            <person name="Pham P.K."/>
            <person name="Cheuk R.F."/>
            <person name="Karlin-Newmann G."/>
            <person name="Liu S.X."/>
            <person name="Lam B."/>
            <person name="Sakano H."/>
            <person name="Wu T."/>
            <person name="Yu G."/>
            <person name="Miranda M."/>
            <person name="Quach H.L."/>
            <person name="Tripp M."/>
            <person name="Chang C.H."/>
            <person name="Lee J.M."/>
            <person name="Toriumi M.J."/>
            <person name="Chan M.M."/>
            <person name="Tang C.C."/>
            <person name="Onodera C.S."/>
            <person name="Deng J.M."/>
            <person name="Akiyama K."/>
            <person name="Ansari Y."/>
            <person name="Arakawa T."/>
            <person name="Banh J."/>
            <person name="Banno F."/>
            <person name="Bowser L."/>
            <person name="Brooks S.Y."/>
            <person name="Carninci P."/>
            <person name="Chao Q."/>
            <person name="Choy N."/>
            <person name="Enju A."/>
            <person name="Goldsmith A.D."/>
            <person name="Gurjal M."/>
            <person name="Hansen N.F."/>
            <person name="Hayashizaki Y."/>
            <person name="Johnson-Hopson C."/>
            <person name="Hsuan V.W."/>
            <person name="Iida K."/>
            <person name="Karnes M."/>
            <person name="Khan S."/>
            <person name="Koesema E."/>
            <person name="Ishida J."/>
            <person name="Jiang P.X."/>
            <person name="Jones T."/>
            <person name="Kawai J."/>
            <person name="Kamiya A."/>
            <person name="Meyers C."/>
            <person name="Nakajima M."/>
            <person name="Narusaka M."/>
            <person name="Seki M."/>
            <person name="Sakurai T."/>
            <person name="Satou M."/>
            <person name="Tamse R."/>
            <person name="Vaysberg M."/>
            <person name="Wallender E.K."/>
            <person name="Wong C."/>
            <person name="Yamamura Y."/>
            <person name="Yuan S."/>
            <person name="Shinozaki K."/>
            <person name="Davis R.W."/>
            <person name="Theologis A."/>
            <person name="Ecker J.R."/>
        </authorList>
    </citation>
    <scope>NUCLEOTIDE SEQUENCE [LARGE SCALE MRNA]</scope>
    <source>
        <strain>cv. Columbia</strain>
    </source>
</reference>
<gene>
    <name evidence="1" type="primary">COQ5</name>
    <name type="ordered locus">At5g57300</name>
    <name type="ORF">MJB24.11</name>
</gene>
<sequence>MALRSVSRRLGSRILNQRSFVASLHSHATSFGFQEVKEEEKSKLVGNVFTNVASSYDIMNDVMSGGLHRLWKERLVGKLSPFAGMKHLDVAGGTGDVAFRIYDAVYSVKRRALQKVDEASLEETQIYVCDINPNMLNVGKQRAAERGLRDNKSLVWVEGDAEALSFDDNSMDGYTIAFGIRNVTHIEKALAEAYRVLKRGGRFLCLELSHVEIPVFKNLYDLYSFQVIPNLGELIAGDRESYQYLVESVRRFPPQERFASMIADAGFEKVEYENLVGGVVAIHSAIKL</sequence>